<keyword id="KW-0963">Cytoplasm</keyword>
<keyword id="KW-0489">Methyltransferase</keyword>
<keyword id="KW-1185">Reference proteome</keyword>
<keyword id="KW-0698">rRNA processing</keyword>
<keyword id="KW-0949">S-adenosyl-L-methionine</keyword>
<keyword id="KW-0808">Transferase</keyword>
<proteinExistence type="inferred from homology"/>
<gene>
    <name evidence="1" type="primary">rsmH</name>
    <name type="synonym">mraW</name>
    <name type="ordered locus">CHU_2748</name>
</gene>
<comment type="function">
    <text evidence="1">Specifically methylates the N4 position of cytidine in position 1402 (C1402) of 16S rRNA.</text>
</comment>
<comment type="catalytic activity">
    <reaction evidence="1">
        <text>cytidine(1402) in 16S rRNA + S-adenosyl-L-methionine = N(4)-methylcytidine(1402) in 16S rRNA + S-adenosyl-L-homocysteine + H(+)</text>
        <dbReference type="Rhea" id="RHEA:42928"/>
        <dbReference type="Rhea" id="RHEA-COMP:10286"/>
        <dbReference type="Rhea" id="RHEA-COMP:10287"/>
        <dbReference type="ChEBI" id="CHEBI:15378"/>
        <dbReference type="ChEBI" id="CHEBI:57856"/>
        <dbReference type="ChEBI" id="CHEBI:59789"/>
        <dbReference type="ChEBI" id="CHEBI:74506"/>
        <dbReference type="ChEBI" id="CHEBI:82748"/>
        <dbReference type="EC" id="2.1.1.199"/>
    </reaction>
</comment>
<comment type="subcellular location">
    <subcellularLocation>
        <location evidence="1">Cytoplasm</location>
    </subcellularLocation>
</comment>
<comment type="similarity">
    <text evidence="1">Belongs to the methyltransferase superfamily. RsmH family.</text>
</comment>
<sequence>MYHVPVLLKESVEGLNINPEGIYVDVTFGGGGHSREILKHLKGGKLYAFDQDADAVDNAKDLIGPNFTLIPANFRYIKKYLRLNGVDKVDGLLGDLGISSHQIDTPERGFSIRYDAPLDMRMDRAIDKTAADIINKYSEHGLHSILGMYGEVRNAKTLAQALVKERINKPINRTSELIEVLSDYAPRGKESKYYAQVFQALRIEVNEELEALKDLLEQSQQVLKSGGRLSIISYHSLEDRLVKNFVQQGKFHGDAEKDLYGNTNKPFKSVGKAIDPDDEEKERNNRARSARLRIAERE</sequence>
<name>RSMH_CYTH3</name>
<organism>
    <name type="scientific">Cytophaga hutchinsonii (strain ATCC 33406 / DSM 1761 / CIP 103989 / NBRC 15051 / NCIMB 9469 / D465)</name>
    <dbReference type="NCBI Taxonomy" id="269798"/>
    <lineage>
        <taxon>Bacteria</taxon>
        <taxon>Pseudomonadati</taxon>
        <taxon>Bacteroidota</taxon>
        <taxon>Cytophagia</taxon>
        <taxon>Cytophagales</taxon>
        <taxon>Cytophagaceae</taxon>
        <taxon>Cytophaga</taxon>
    </lineage>
</organism>
<accession>Q11RG6</accession>
<feature type="chain" id="PRO_0000318872" description="Ribosomal RNA small subunit methyltransferase H">
    <location>
        <begin position="1"/>
        <end position="298"/>
    </location>
</feature>
<feature type="region of interest" description="Disordered" evidence="2">
    <location>
        <begin position="255"/>
        <end position="298"/>
    </location>
</feature>
<feature type="binding site" evidence="1">
    <location>
        <begin position="31"/>
        <end position="33"/>
    </location>
    <ligand>
        <name>S-adenosyl-L-methionine</name>
        <dbReference type="ChEBI" id="CHEBI:59789"/>
    </ligand>
</feature>
<feature type="binding site" evidence="1">
    <location>
        <position position="50"/>
    </location>
    <ligand>
        <name>S-adenosyl-L-methionine</name>
        <dbReference type="ChEBI" id="CHEBI:59789"/>
    </ligand>
</feature>
<feature type="binding site" evidence="1">
    <location>
        <position position="80"/>
    </location>
    <ligand>
        <name>S-adenosyl-L-methionine</name>
        <dbReference type="ChEBI" id="CHEBI:59789"/>
    </ligand>
</feature>
<feature type="binding site" evidence="1">
    <location>
        <position position="95"/>
    </location>
    <ligand>
        <name>S-adenosyl-L-methionine</name>
        <dbReference type="ChEBI" id="CHEBI:59789"/>
    </ligand>
</feature>
<feature type="binding site" evidence="1">
    <location>
        <position position="102"/>
    </location>
    <ligand>
        <name>S-adenosyl-L-methionine</name>
        <dbReference type="ChEBI" id="CHEBI:59789"/>
    </ligand>
</feature>
<protein>
    <recommendedName>
        <fullName evidence="1">Ribosomal RNA small subunit methyltransferase H</fullName>
        <ecNumber evidence="1">2.1.1.199</ecNumber>
    </recommendedName>
    <alternativeName>
        <fullName evidence="1">16S rRNA m(4)C1402 methyltransferase</fullName>
    </alternativeName>
    <alternativeName>
        <fullName evidence="1">rRNA (cytosine-N(4)-)-methyltransferase RsmH</fullName>
    </alternativeName>
</protein>
<reference key="1">
    <citation type="journal article" date="2007" name="Appl. Environ. Microbiol.">
        <title>Genome sequence of the cellulolytic gliding bacterium Cytophaga hutchinsonii.</title>
        <authorList>
            <person name="Xie G."/>
            <person name="Bruce D.C."/>
            <person name="Challacombe J.F."/>
            <person name="Chertkov O."/>
            <person name="Detter J.C."/>
            <person name="Gilna P."/>
            <person name="Han C.S."/>
            <person name="Lucas S."/>
            <person name="Misra M."/>
            <person name="Myers G.L."/>
            <person name="Richardson P."/>
            <person name="Tapia R."/>
            <person name="Thayer N."/>
            <person name="Thompson L.S."/>
            <person name="Brettin T.S."/>
            <person name="Henrissat B."/>
            <person name="Wilson D.B."/>
            <person name="McBride M.J."/>
        </authorList>
    </citation>
    <scope>NUCLEOTIDE SEQUENCE [LARGE SCALE GENOMIC DNA]</scope>
    <source>
        <strain>ATCC 33406 / DSM 1761 / JCM 20678 / CIP 103989 / IAM 12607 / NBRC 15051 / NCIMB 9469 / D465</strain>
    </source>
</reference>
<evidence type="ECO:0000255" key="1">
    <source>
        <dbReference type="HAMAP-Rule" id="MF_01007"/>
    </source>
</evidence>
<evidence type="ECO:0000256" key="2">
    <source>
        <dbReference type="SAM" id="MobiDB-lite"/>
    </source>
</evidence>
<dbReference type="EC" id="2.1.1.199" evidence="1"/>
<dbReference type="EMBL" id="CP000383">
    <property type="protein sequence ID" value="ABG59998.1"/>
    <property type="molecule type" value="Genomic_DNA"/>
</dbReference>
<dbReference type="RefSeq" id="WP_011586108.1">
    <property type="nucleotide sequence ID" value="NC_008255.1"/>
</dbReference>
<dbReference type="SMR" id="Q11RG6"/>
<dbReference type="STRING" id="269798.CHU_2748"/>
<dbReference type="KEGG" id="chu:CHU_2748"/>
<dbReference type="eggNOG" id="COG0275">
    <property type="taxonomic scope" value="Bacteria"/>
</dbReference>
<dbReference type="HOGENOM" id="CLU_038422_2_0_10"/>
<dbReference type="OrthoDB" id="9806637at2"/>
<dbReference type="Proteomes" id="UP000001822">
    <property type="component" value="Chromosome"/>
</dbReference>
<dbReference type="GO" id="GO:0005737">
    <property type="term" value="C:cytoplasm"/>
    <property type="evidence" value="ECO:0007669"/>
    <property type="project" value="UniProtKB-SubCell"/>
</dbReference>
<dbReference type="GO" id="GO:0071424">
    <property type="term" value="F:rRNA (cytosine-N4-)-methyltransferase activity"/>
    <property type="evidence" value="ECO:0007669"/>
    <property type="project" value="UniProtKB-UniRule"/>
</dbReference>
<dbReference type="GO" id="GO:0070475">
    <property type="term" value="P:rRNA base methylation"/>
    <property type="evidence" value="ECO:0007669"/>
    <property type="project" value="UniProtKB-UniRule"/>
</dbReference>
<dbReference type="Gene3D" id="1.10.150.170">
    <property type="entry name" value="Putative methyltransferase TM0872, insert domain"/>
    <property type="match status" value="1"/>
</dbReference>
<dbReference type="Gene3D" id="3.40.50.150">
    <property type="entry name" value="Vaccinia Virus protein VP39"/>
    <property type="match status" value="1"/>
</dbReference>
<dbReference type="HAMAP" id="MF_01007">
    <property type="entry name" value="16SrRNA_methyltr_H"/>
    <property type="match status" value="1"/>
</dbReference>
<dbReference type="InterPro" id="IPR002903">
    <property type="entry name" value="RsmH"/>
</dbReference>
<dbReference type="InterPro" id="IPR023397">
    <property type="entry name" value="SAM-dep_MeTrfase_MraW_recog"/>
</dbReference>
<dbReference type="InterPro" id="IPR029063">
    <property type="entry name" value="SAM-dependent_MTases_sf"/>
</dbReference>
<dbReference type="NCBIfam" id="TIGR00006">
    <property type="entry name" value="16S rRNA (cytosine(1402)-N(4))-methyltransferase RsmH"/>
    <property type="match status" value="1"/>
</dbReference>
<dbReference type="PANTHER" id="PTHR11265:SF0">
    <property type="entry name" value="12S RRNA N4-METHYLCYTIDINE METHYLTRANSFERASE"/>
    <property type="match status" value="1"/>
</dbReference>
<dbReference type="PANTHER" id="PTHR11265">
    <property type="entry name" value="S-ADENOSYL-METHYLTRANSFERASE MRAW"/>
    <property type="match status" value="1"/>
</dbReference>
<dbReference type="Pfam" id="PF01795">
    <property type="entry name" value="Methyltransf_5"/>
    <property type="match status" value="1"/>
</dbReference>
<dbReference type="PIRSF" id="PIRSF004486">
    <property type="entry name" value="MraW"/>
    <property type="match status" value="1"/>
</dbReference>
<dbReference type="SUPFAM" id="SSF81799">
    <property type="entry name" value="Putative methyltransferase TM0872, insert domain"/>
    <property type="match status" value="1"/>
</dbReference>
<dbReference type="SUPFAM" id="SSF53335">
    <property type="entry name" value="S-adenosyl-L-methionine-dependent methyltransferases"/>
    <property type="match status" value="1"/>
</dbReference>